<name>GLGB_CHLFF</name>
<gene>
    <name evidence="1" type="primary">glgB</name>
    <name type="ordered locus">CF0740</name>
</gene>
<evidence type="ECO:0000255" key="1">
    <source>
        <dbReference type="HAMAP-Rule" id="MF_00685"/>
    </source>
</evidence>
<protein>
    <recommendedName>
        <fullName evidence="1">1,4-alpha-glucan branching enzyme GlgB</fullName>
        <ecNumber evidence="1">2.4.1.18</ecNumber>
    </recommendedName>
    <alternativeName>
        <fullName evidence="1">1,4-alpha-D-glucan:1,4-alpha-D-glucan 6-glucosyl-transferase</fullName>
    </alternativeName>
    <alternativeName>
        <fullName evidence="1">Alpha-(1-&gt;4)-glucan branching enzyme</fullName>
    </alternativeName>
    <alternativeName>
        <fullName evidence="1">Glycogen branching enzyme</fullName>
        <shortName evidence="1">BE</shortName>
    </alternativeName>
</protein>
<organism>
    <name type="scientific">Chlamydia felis (strain Fe/C-56)</name>
    <name type="common">Chlamydophila felis</name>
    <dbReference type="NCBI Taxonomy" id="264202"/>
    <lineage>
        <taxon>Bacteria</taxon>
        <taxon>Pseudomonadati</taxon>
        <taxon>Chlamydiota</taxon>
        <taxon>Chlamydiia</taxon>
        <taxon>Chlamydiales</taxon>
        <taxon>Chlamydiaceae</taxon>
        <taxon>Chlamydia/Chlamydophila group</taxon>
        <taxon>Chlamydia</taxon>
    </lineage>
</organism>
<dbReference type="EC" id="2.4.1.18" evidence="1"/>
<dbReference type="EMBL" id="AP006861">
    <property type="protein sequence ID" value="BAE81512.1"/>
    <property type="molecule type" value="Genomic_DNA"/>
</dbReference>
<dbReference type="RefSeq" id="WP_011458290.1">
    <property type="nucleotide sequence ID" value="NC_007899.1"/>
</dbReference>
<dbReference type="SMR" id="Q253M6"/>
<dbReference type="STRING" id="264202.CF0740"/>
<dbReference type="CAZy" id="CBM48">
    <property type="family name" value="Carbohydrate-Binding Module Family 48"/>
</dbReference>
<dbReference type="CAZy" id="GH13">
    <property type="family name" value="Glycoside Hydrolase Family 13"/>
</dbReference>
<dbReference type="KEGG" id="cfe:CF0740"/>
<dbReference type="eggNOG" id="COG0296">
    <property type="taxonomic scope" value="Bacteria"/>
</dbReference>
<dbReference type="HOGENOM" id="CLU_004245_3_2_0"/>
<dbReference type="OrthoDB" id="9800174at2"/>
<dbReference type="UniPathway" id="UPA00164"/>
<dbReference type="Proteomes" id="UP000001260">
    <property type="component" value="Chromosome"/>
</dbReference>
<dbReference type="GO" id="GO:0005829">
    <property type="term" value="C:cytosol"/>
    <property type="evidence" value="ECO:0007669"/>
    <property type="project" value="TreeGrafter"/>
</dbReference>
<dbReference type="GO" id="GO:0003844">
    <property type="term" value="F:1,4-alpha-glucan branching enzyme activity"/>
    <property type="evidence" value="ECO:0007669"/>
    <property type="project" value="UniProtKB-UniRule"/>
</dbReference>
<dbReference type="GO" id="GO:0043169">
    <property type="term" value="F:cation binding"/>
    <property type="evidence" value="ECO:0007669"/>
    <property type="project" value="InterPro"/>
</dbReference>
<dbReference type="GO" id="GO:0004553">
    <property type="term" value="F:hydrolase activity, hydrolyzing O-glycosyl compounds"/>
    <property type="evidence" value="ECO:0007669"/>
    <property type="project" value="InterPro"/>
</dbReference>
<dbReference type="GO" id="GO:0005978">
    <property type="term" value="P:glycogen biosynthetic process"/>
    <property type="evidence" value="ECO:0007669"/>
    <property type="project" value="UniProtKB-UniRule"/>
</dbReference>
<dbReference type="CDD" id="cd11322">
    <property type="entry name" value="AmyAc_Glg_BE"/>
    <property type="match status" value="1"/>
</dbReference>
<dbReference type="CDD" id="cd02855">
    <property type="entry name" value="E_set_GBE_prok_N"/>
    <property type="match status" value="1"/>
</dbReference>
<dbReference type="FunFam" id="2.60.40.10:FF:000169">
    <property type="entry name" value="1,4-alpha-glucan branching enzyme GlgB"/>
    <property type="match status" value="1"/>
</dbReference>
<dbReference type="FunFam" id="3.20.20.80:FF:000003">
    <property type="entry name" value="1,4-alpha-glucan branching enzyme GlgB"/>
    <property type="match status" value="1"/>
</dbReference>
<dbReference type="Gene3D" id="3.20.20.80">
    <property type="entry name" value="Glycosidases"/>
    <property type="match status" value="1"/>
</dbReference>
<dbReference type="Gene3D" id="2.60.40.1180">
    <property type="entry name" value="Golgi alpha-mannosidase II"/>
    <property type="match status" value="1"/>
</dbReference>
<dbReference type="Gene3D" id="2.60.40.10">
    <property type="entry name" value="Immunoglobulins"/>
    <property type="match status" value="2"/>
</dbReference>
<dbReference type="HAMAP" id="MF_00685">
    <property type="entry name" value="GlgB"/>
    <property type="match status" value="1"/>
</dbReference>
<dbReference type="InterPro" id="IPR006048">
    <property type="entry name" value="A-amylase/branching_C"/>
</dbReference>
<dbReference type="InterPro" id="IPR037439">
    <property type="entry name" value="Branching_enzy"/>
</dbReference>
<dbReference type="InterPro" id="IPR006407">
    <property type="entry name" value="GlgB"/>
</dbReference>
<dbReference type="InterPro" id="IPR054169">
    <property type="entry name" value="GlgB_N"/>
</dbReference>
<dbReference type="InterPro" id="IPR044143">
    <property type="entry name" value="GlgB_N_E_set_prok"/>
</dbReference>
<dbReference type="InterPro" id="IPR006047">
    <property type="entry name" value="Glyco_hydro_13_cat_dom"/>
</dbReference>
<dbReference type="InterPro" id="IPR004193">
    <property type="entry name" value="Glyco_hydro_13_N"/>
</dbReference>
<dbReference type="InterPro" id="IPR013780">
    <property type="entry name" value="Glyco_hydro_b"/>
</dbReference>
<dbReference type="InterPro" id="IPR017853">
    <property type="entry name" value="Glycoside_hydrolase_SF"/>
</dbReference>
<dbReference type="InterPro" id="IPR013783">
    <property type="entry name" value="Ig-like_fold"/>
</dbReference>
<dbReference type="InterPro" id="IPR014756">
    <property type="entry name" value="Ig_E-set"/>
</dbReference>
<dbReference type="NCBIfam" id="TIGR01515">
    <property type="entry name" value="branching_enzym"/>
    <property type="match status" value="1"/>
</dbReference>
<dbReference type="NCBIfam" id="NF003811">
    <property type="entry name" value="PRK05402.1"/>
    <property type="match status" value="1"/>
</dbReference>
<dbReference type="NCBIfam" id="NF008967">
    <property type="entry name" value="PRK12313.1"/>
    <property type="match status" value="1"/>
</dbReference>
<dbReference type="PANTHER" id="PTHR43651">
    <property type="entry name" value="1,4-ALPHA-GLUCAN-BRANCHING ENZYME"/>
    <property type="match status" value="1"/>
</dbReference>
<dbReference type="PANTHER" id="PTHR43651:SF3">
    <property type="entry name" value="1,4-ALPHA-GLUCAN-BRANCHING ENZYME"/>
    <property type="match status" value="1"/>
</dbReference>
<dbReference type="Pfam" id="PF00128">
    <property type="entry name" value="Alpha-amylase"/>
    <property type="match status" value="2"/>
</dbReference>
<dbReference type="Pfam" id="PF02806">
    <property type="entry name" value="Alpha-amylase_C"/>
    <property type="match status" value="1"/>
</dbReference>
<dbReference type="Pfam" id="PF02922">
    <property type="entry name" value="CBM_48"/>
    <property type="match status" value="1"/>
</dbReference>
<dbReference type="Pfam" id="PF22019">
    <property type="entry name" value="GlgB_N"/>
    <property type="match status" value="1"/>
</dbReference>
<dbReference type="PIRSF" id="PIRSF000463">
    <property type="entry name" value="GlgB"/>
    <property type="match status" value="1"/>
</dbReference>
<dbReference type="SMART" id="SM00642">
    <property type="entry name" value="Aamy"/>
    <property type="match status" value="1"/>
</dbReference>
<dbReference type="SUPFAM" id="SSF51445">
    <property type="entry name" value="(Trans)glycosidases"/>
    <property type="match status" value="1"/>
</dbReference>
<dbReference type="SUPFAM" id="SSF81296">
    <property type="entry name" value="E set domains"/>
    <property type="match status" value="2"/>
</dbReference>
<dbReference type="SUPFAM" id="SSF51011">
    <property type="entry name" value="Glycosyl hydrolase domain"/>
    <property type="match status" value="1"/>
</dbReference>
<proteinExistence type="inferred from homology"/>
<reference key="1">
    <citation type="journal article" date="2006" name="DNA Res.">
        <title>Genome sequence of the cat pathogen, Chlamydophila felis.</title>
        <authorList>
            <person name="Azuma Y."/>
            <person name="Hirakawa H."/>
            <person name="Yamashita A."/>
            <person name="Cai Y."/>
            <person name="Rahman M.A."/>
            <person name="Suzuki H."/>
            <person name="Mitaku S."/>
            <person name="Toh H."/>
            <person name="Goto S."/>
            <person name="Murakami T."/>
            <person name="Sugi K."/>
            <person name="Hayashi H."/>
            <person name="Fukushi H."/>
            <person name="Hattori M."/>
            <person name="Kuhara S."/>
            <person name="Shirai M."/>
        </authorList>
    </citation>
    <scope>NUCLEOTIDE SEQUENCE [LARGE SCALE GENOMIC DNA]</scope>
    <source>
        <strain>Fe/C-56</strain>
    </source>
</reference>
<sequence>MVERILNSEDISLLISGRQSNPHKLLGIISENSSQDRIILFRPGAHSVAVELQGNIEHATHHHSGIFSLTTPKGTLLNDYRIYHQNGLLAHDPYAFSPLWGEIDSFLFHQGTHYKIYERMGAIPCDVRGISGVLFVVWAPHAQRVSVIGDFNFWNGLVNPLRKVSDSGVWELFIPGLDEGTLYKWEIVSASGEILIKTDPYGKGFDVPPLATSRVINSDRYVWHDAEWMEKRSCTQDQPLSIYEVHVGSWQWQDGRPIGYRGLAERLAQYCKEMSYTHIELLPITEHPLNESWGYQVTGYYAPTWRYGSPEDFQFFVDHLHSEGIGVILDWVPGHFPTDTFALAHFDGEALYESVDHKEPLHPHWHTYTFDYRCNEVVNFLLGSALFWLDKMHIDGLRVDAVTSMLYLDYGRKEGEWSPNIHGGKENLDAIEFLKHFNFIVHKEFPGVMTFAEESTDFPKVTEPINSGGLGFDYKWNLGWMHDTFRYLKVDPIFRAYHHNDLTFSIWYAFKENYLLPLSHDEVVHGKGSLLQKVPGDTWSKFAHMRLLLSYQICQPGKKLVFMGGEFAQGREWSPDRSLDWHLLDNPYHATLHKCVAKMNSLYRDLPYFWQGDGKQESFRWIDFKDTENNVISYYRLSGNDSNQALLCIHHFSSGYIPSYVLHCQGIKMCQLLFNSDDIGFGGSGKGNRPPILCIDHGFSWGIDIELPPLATLIFLVRFSN</sequence>
<comment type="function">
    <text evidence="1">Catalyzes the formation of the alpha-1,6-glucosidic linkages in glycogen by scission of a 1,4-alpha-linked oligosaccharide from growing alpha-1,4-glucan chains and the subsequent attachment of the oligosaccharide to the alpha-1,6 position.</text>
</comment>
<comment type="catalytic activity">
    <reaction evidence="1">
        <text>Transfers a segment of a (1-&gt;4)-alpha-D-glucan chain to a primary hydroxy group in a similar glucan chain.</text>
        <dbReference type="EC" id="2.4.1.18"/>
    </reaction>
</comment>
<comment type="pathway">
    <text evidence="1">Glycan biosynthesis; glycogen biosynthesis.</text>
</comment>
<comment type="subunit">
    <text evidence="1">Monomer.</text>
</comment>
<comment type="similarity">
    <text evidence="1">Belongs to the glycosyl hydrolase 13 family. GlgB subfamily.</text>
</comment>
<feature type="chain" id="PRO_0000260644" description="1,4-alpha-glucan branching enzyme GlgB">
    <location>
        <begin position="1"/>
        <end position="721"/>
    </location>
</feature>
<feature type="active site" description="Nucleophile" evidence="1">
    <location>
        <position position="400"/>
    </location>
</feature>
<feature type="active site" description="Proton donor" evidence="1">
    <location>
        <position position="453"/>
    </location>
</feature>
<accession>Q253M6</accession>
<keyword id="KW-0119">Carbohydrate metabolism</keyword>
<keyword id="KW-0320">Glycogen biosynthesis</keyword>
<keyword id="KW-0321">Glycogen metabolism</keyword>
<keyword id="KW-0328">Glycosyltransferase</keyword>
<keyword id="KW-0808">Transferase</keyword>